<proteinExistence type="inferred from homology"/>
<organism>
    <name type="scientific">Ruthia magnifica subsp. Calyptogena magnifica</name>
    <dbReference type="NCBI Taxonomy" id="413404"/>
    <lineage>
        <taxon>Bacteria</taxon>
        <taxon>Pseudomonadati</taxon>
        <taxon>Pseudomonadota</taxon>
        <taxon>Gammaproteobacteria</taxon>
        <taxon>Candidatus Pseudothioglobaceae</taxon>
        <taxon>Candidatus Ruthturnera</taxon>
    </lineage>
</organism>
<comment type="function">
    <text evidence="1">Exhibits a very high intrinsic GTPase hydrolysis rate. Involved in the addition of a carboxymethylaminomethyl (cmnm) group at the wobble position (U34) of certain tRNAs, forming tRNA-cmnm(5)s(2)U34.</text>
</comment>
<comment type="cofactor">
    <cofactor evidence="1">
        <name>K(+)</name>
        <dbReference type="ChEBI" id="CHEBI:29103"/>
    </cofactor>
    <text evidence="1">Binds 1 potassium ion per subunit.</text>
</comment>
<comment type="subunit">
    <text evidence="1">Homodimer. Heterotetramer of two MnmE and two MnmG subunits.</text>
</comment>
<comment type="subcellular location">
    <subcellularLocation>
        <location evidence="1">Cytoplasm</location>
    </subcellularLocation>
</comment>
<comment type="similarity">
    <text evidence="1">Belongs to the TRAFAC class TrmE-Era-EngA-EngB-Septin-like GTPase superfamily. TrmE GTPase family.</text>
</comment>
<protein>
    <recommendedName>
        <fullName evidence="1">tRNA modification GTPase MnmE</fullName>
        <ecNumber evidence="1">3.6.-.-</ecNumber>
    </recommendedName>
</protein>
<dbReference type="EC" id="3.6.-.-" evidence="1"/>
<dbReference type="EMBL" id="CP000488">
    <property type="protein sequence ID" value="ABL02720.1"/>
    <property type="molecule type" value="Genomic_DNA"/>
</dbReference>
<dbReference type="RefSeq" id="WP_011738345.1">
    <property type="nucleotide sequence ID" value="NC_008610.1"/>
</dbReference>
<dbReference type="SMR" id="A1AXR3"/>
<dbReference type="STRING" id="413404.Rmag_1014"/>
<dbReference type="KEGG" id="rma:Rmag_1014"/>
<dbReference type="eggNOG" id="COG0486">
    <property type="taxonomic scope" value="Bacteria"/>
</dbReference>
<dbReference type="HOGENOM" id="CLU_019624_4_1_6"/>
<dbReference type="OrthoDB" id="9805918at2"/>
<dbReference type="Proteomes" id="UP000002587">
    <property type="component" value="Chromosome"/>
</dbReference>
<dbReference type="GO" id="GO:0005829">
    <property type="term" value="C:cytosol"/>
    <property type="evidence" value="ECO:0007669"/>
    <property type="project" value="TreeGrafter"/>
</dbReference>
<dbReference type="GO" id="GO:0005525">
    <property type="term" value="F:GTP binding"/>
    <property type="evidence" value="ECO:0007669"/>
    <property type="project" value="UniProtKB-UniRule"/>
</dbReference>
<dbReference type="GO" id="GO:0003924">
    <property type="term" value="F:GTPase activity"/>
    <property type="evidence" value="ECO:0007669"/>
    <property type="project" value="UniProtKB-UniRule"/>
</dbReference>
<dbReference type="GO" id="GO:0046872">
    <property type="term" value="F:metal ion binding"/>
    <property type="evidence" value="ECO:0007669"/>
    <property type="project" value="UniProtKB-KW"/>
</dbReference>
<dbReference type="GO" id="GO:0030488">
    <property type="term" value="P:tRNA methylation"/>
    <property type="evidence" value="ECO:0007669"/>
    <property type="project" value="TreeGrafter"/>
</dbReference>
<dbReference type="GO" id="GO:0002098">
    <property type="term" value="P:tRNA wobble uridine modification"/>
    <property type="evidence" value="ECO:0007669"/>
    <property type="project" value="TreeGrafter"/>
</dbReference>
<dbReference type="CDD" id="cd04164">
    <property type="entry name" value="trmE"/>
    <property type="match status" value="1"/>
</dbReference>
<dbReference type="CDD" id="cd14858">
    <property type="entry name" value="TrmE_N"/>
    <property type="match status" value="1"/>
</dbReference>
<dbReference type="FunFam" id="3.40.50.300:FF:001376">
    <property type="entry name" value="tRNA modification GTPase MnmE"/>
    <property type="match status" value="1"/>
</dbReference>
<dbReference type="Gene3D" id="3.40.50.300">
    <property type="entry name" value="P-loop containing nucleotide triphosphate hydrolases"/>
    <property type="match status" value="1"/>
</dbReference>
<dbReference type="Gene3D" id="3.30.1360.120">
    <property type="entry name" value="Probable tRNA modification gtpase trme, domain 1"/>
    <property type="match status" value="1"/>
</dbReference>
<dbReference type="Gene3D" id="1.20.120.430">
    <property type="entry name" value="tRNA modification GTPase MnmE domain 2"/>
    <property type="match status" value="1"/>
</dbReference>
<dbReference type="HAMAP" id="MF_00379">
    <property type="entry name" value="GTPase_MnmE"/>
    <property type="match status" value="1"/>
</dbReference>
<dbReference type="InterPro" id="IPR031168">
    <property type="entry name" value="G_TrmE"/>
</dbReference>
<dbReference type="InterPro" id="IPR006073">
    <property type="entry name" value="GTP-bd"/>
</dbReference>
<dbReference type="InterPro" id="IPR018948">
    <property type="entry name" value="GTP-bd_TrmE_N"/>
</dbReference>
<dbReference type="InterPro" id="IPR004520">
    <property type="entry name" value="GTPase_MnmE"/>
</dbReference>
<dbReference type="InterPro" id="IPR027368">
    <property type="entry name" value="MnmE_dom2"/>
</dbReference>
<dbReference type="InterPro" id="IPR025867">
    <property type="entry name" value="MnmE_helical"/>
</dbReference>
<dbReference type="InterPro" id="IPR027417">
    <property type="entry name" value="P-loop_NTPase"/>
</dbReference>
<dbReference type="InterPro" id="IPR005225">
    <property type="entry name" value="Small_GTP-bd"/>
</dbReference>
<dbReference type="InterPro" id="IPR027266">
    <property type="entry name" value="TrmE/GcvT_dom1"/>
</dbReference>
<dbReference type="NCBIfam" id="TIGR00450">
    <property type="entry name" value="mnmE_trmE_thdF"/>
    <property type="match status" value="1"/>
</dbReference>
<dbReference type="NCBIfam" id="NF003661">
    <property type="entry name" value="PRK05291.1-3"/>
    <property type="match status" value="1"/>
</dbReference>
<dbReference type="NCBIfam" id="TIGR00231">
    <property type="entry name" value="small_GTP"/>
    <property type="match status" value="1"/>
</dbReference>
<dbReference type="PANTHER" id="PTHR42714">
    <property type="entry name" value="TRNA MODIFICATION GTPASE GTPBP3"/>
    <property type="match status" value="1"/>
</dbReference>
<dbReference type="PANTHER" id="PTHR42714:SF2">
    <property type="entry name" value="TRNA MODIFICATION GTPASE GTPBP3, MITOCHONDRIAL"/>
    <property type="match status" value="1"/>
</dbReference>
<dbReference type="Pfam" id="PF01926">
    <property type="entry name" value="MMR_HSR1"/>
    <property type="match status" value="1"/>
</dbReference>
<dbReference type="Pfam" id="PF12631">
    <property type="entry name" value="MnmE_helical"/>
    <property type="match status" value="1"/>
</dbReference>
<dbReference type="Pfam" id="PF10396">
    <property type="entry name" value="TrmE_N"/>
    <property type="match status" value="1"/>
</dbReference>
<dbReference type="SUPFAM" id="SSF52540">
    <property type="entry name" value="P-loop containing nucleoside triphosphate hydrolases"/>
    <property type="match status" value="1"/>
</dbReference>
<dbReference type="SUPFAM" id="SSF116878">
    <property type="entry name" value="TrmE connector domain"/>
    <property type="match status" value="1"/>
</dbReference>
<dbReference type="PROSITE" id="PS51709">
    <property type="entry name" value="G_TRME"/>
    <property type="match status" value="1"/>
</dbReference>
<reference key="1">
    <citation type="journal article" date="2007" name="Science">
        <title>The Calyptogena magnifica chemoautotrophic symbiont genome.</title>
        <authorList>
            <person name="Newton I.L.G."/>
            <person name="Woyke T."/>
            <person name="Auchtung T.A."/>
            <person name="Dilly G.F."/>
            <person name="Dutton R.J."/>
            <person name="Fisher M.C."/>
            <person name="Fontanez K.M."/>
            <person name="Lau E."/>
            <person name="Stewart F.J."/>
            <person name="Richardson P.M."/>
            <person name="Barry K.W."/>
            <person name="Saunders E."/>
            <person name="Detter J.C."/>
            <person name="Wu D."/>
            <person name="Eisen J.A."/>
            <person name="Cavanaugh C.M."/>
        </authorList>
    </citation>
    <scope>NUCLEOTIDE SEQUENCE [LARGE SCALE GENOMIC DNA]</scope>
</reference>
<name>MNME_RUTMC</name>
<evidence type="ECO:0000255" key="1">
    <source>
        <dbReference type="HAMAP-Rule" id="MF_00379"/>
    </source>
</evidence>
<gene>
    <name evidence="1" type="primary">mnmE</name>
    <name evidence="1" type="synonym">trmE</name>
    <name type="ordered locus">Rmag_1014</name>
</gene>
<sequence length="447" mass="48541">MNSSETTICALASGVCKGGIGVVRVSGPLCKVIAKKMLGFVPKPRYAHYGLFFDQENDEIDKGIALFFPKPHSFTGEDILEFQGHGGMSVMCCLLESVISMGAKPADPGEFSKRAFLNGKMNLVQAEAVADMINANSKRASKSAFRSLSGEFSNQVNALTKSIVELRVFVEATIDFSDEEIDFLQFEQVKLKAKGIKQAVETILKSATQGVILREGLNVVIAGKPNAGKSSLLNALTQESSAIVTDIAGTTRDVLKETICVNGMPLNIIDTAGLHDSDDKIEKEGIKRAHFEIERADVVLMVFDAQDDKPDFSILPKNIDDQPLLLIKNKVDLISGAVKKEMINNIVQLSISAKHSKGMELLRKELSDIAGLEDFSEGVVLSRKRHIIALEESLASIDNAIMQLENGVVELMAEDLRFAGQFMGSITGEFSSDDLLGEIFSSFCIGK</sequence>
<keyword id="KW-0963">Cytoplasm</keyword>
<keyword id="KW-0342">GTP-binding</keyword>
<keyword id="KW-0378">Hydrolase</keyword>
<keyword id="KW-0460">Magnesium</keyword>
<keyword id="KW-0479">Metal-binding</keyword>
<keyword id="KW-0547">Nucleotide-binding</keyword>
<keyword id="KW-0630">Potassium</keyword>
<keyword id="KW-0819">tRNA processing</keyword>
<accession>A1AXR3</accession>
<feature type="chain" id="PRO_1000048868" description="tRNA modification GTPase MnmE">
    <location>
        <begin position="1"/>
        <end position="447"/>
    </location>
</feature>
<feature type="domain" description="TrmE-type G">
    <location>
        <begin position="216"/>
        <end position="371"/>
    </location>
</feature>
<feature type="binding site" evidence="1">
    <location>
        <position position="24"/>
    </location>
    <ligand>
        <name>(6S)-5-formyl-5,6,7,8-tetrahydrofolate</name>
        <dbReference type="ChEBI" id="CHEBI:57457"/>
    </ligand>
</feature>
<feature type="binding site" evidence="1">
    <location>
        <position position="81"/>
    </location>
    <ligand>
        <name>(6S)-5-formyl-5,6,7,8-tetrahydrofolate</name>
        <dbReference type="ChEBI" id="CHEBI:57457"/>
    </ligand>
</feature>
<feature type="binding site" evidence="1">
    <location>
        <position position="120"/>
    </location>
    <ligand>
        <name>(6S)-5-formyl-5,6,7,8-tetrahydrofolate</name>
        <dbReference type="ChEBI" id="CHEBI:57457"/>
    </ligand>
</feature>
<feature type="binding site" evidence="1">
    <location>
        <begin position="226"/>
        <end position="231"/>
    </location>
    <ligand>
        <name>GTP</name>
        <dbReference type="ChEBI" id="CHEBI:37565"/>
    </ligand>
</feature>
<feature type="binding site" evidence="1">
    <location>
        <position position="226"/>
    </location>
    <ligand>
        <name>K(+)</name>
        <dbReference type="ChEBI" id="CHEBI:29103"/>
    </ligand>
</feature>
<feature type="binding site" evidence="1">
    <location>
        <position position="230"/>
    </location>
    <ligand>
        <name>Mg(2+)</name>
        <dbReference type="ChEBI" id="CHEBI:18420"/>
    </ligand>
</feature>
<feature type="binding site" evidence="1">
    <location>
        <begin position="245"/>
        <end position="251"/>
    </location>
    <ligand>
        <name>GTP</name>
        <dbReference type="ChEBI" id="CHEBI:37565"/>
    </ligand>
</feature>
<feature type="binding site" evidence="1">
    <location>
        <position position="245"/>
    </location>
    <ligand>
        <name>K(+)</name>
        <dbReference type="ChEBI" id="CHEBI:29103"/>
    </ligand>
</feature>
<feature type="binding site" evidence="1">
    <location>
        <position position="247"/>
    </location>
    <ligand>
        <name>K(+)</name>
        <dbReference type="ChEBI" id="CHEBI:29103"/>
    </ligand>
</feature>
<feature type="binding site" evidence="1">
    <location>
        <position position="250"/>
    </location>
    <ligand>
        <name>K(+)</name>
        <dbReference type="ChEBI" id="CHEBI:29103"/>
    </ligand>
</feature>
<feature type="binding site" evidence="1">
    <location>
        <position position="251"/>
    </location>
    <ligand>
        <name>Mg(2+)</name>
        <dbReference type="ChEBI" id="CHEBI:18420"/>
    </ligand>
</feature>
<feature type="binding site" evidence="1">
    <location>
        <begin position="270"/>
        <end position="273"/>
    </location>
    <ligand>
        <name>GTP</name>
        <dbReference type="ChEBI" id="CHEBI:37565"/>
    </ligand>
</feature>
<feature type="binding site" evidence="1">
    <location>
        <position position="447"/>
    </location>
    <ligand>
        <name>(6S)-5-formyl-5,6,7,8-tetrahydrofolate</name>
        <dbReference type="ChEBI" id="CHEBI:57457"/>
    </ligand>
</feature>